<gene>
    <name type="primary">AIM36</name>
    <name type="synonym">FMP39</name>
    <name type="ordered locus">KLLA0E01431g</name>
</gene>
<dbReference type="EMBL" id="CR382125">
    <property type="protein sequence ID" value="CAG99100.1"/>
    <property type="molecule type" value="Genomic_DNA"/>
</dbReference>
<dbReference type="RefSeq" id="XP_454013.1">
    <property type="nucleotide sequence ID" value="XM_454013.1"/>
</dbReference>
<dbReference type="FunCoup" id="Q6CPX6">
    <property type="interactions" value="26"/>
</dbReference>
<dbReference type="PaxDb" id="284590-Q6CPX6"/>
<dbReference type="KEGG" id="kla:KLLA0_E01431g"/>
<dbReference type="eggNOG" id="ENOG502S2G9">
    <property type="taxonomic scope" value="Eukaryota"/>
</dbReference>
<dbReference type="HOGENOM" id="CLU_090420_0_0_1"/>
<dbReference type="InParanoid" id="Q6CPX6"/>
<dbReference type="OMA" id="RVAIFPQ"/>
<dbReference type="Proteomes" id="UP000000598">
    <property type="component" value="Chromosome E"/>
</dbReference>
<dbReference type="GO" id="GO:0031966">
    <property type="term" value="C:mitochondrial membrane"/>
    <property type="evidence" value="ECO:0007669"/>
    <property type="project" value="UniProtKB-SubCell"/>
</dbReference>
<evidence type="ECO:0000250" key="1"/>
<evidence type="ECO:0000255" key="2"/>
<evidence type="ECO:0000305" key="3"/>
<sequence>MFVRAAPRLLKSPVMRRMLSGKMDKAEEPPSFKTILLVGLVGTAIFVKAVDSLEQNKPKNTYTFSEFDTVMSGLRRRVSIFEQDDLNLRCVQTGVATKKLKFPEDAKVIKPSEAIEFFRNKSDDKYYVLLNDLYEKEGKSYMEKLPTGLSVVLIGKYMKEKCQKGDTVYLLDFPDNIKDAIKFENEVSVIDKVIVPNSEGDGQVSKYFKTVDKVETI</sequence>
<protein>
    <recommendedName>
        <fullName>Altered inheritance of mitochondria protein 36, mitochondrial</fullName>
    </recommendedName>
    <alternativeName>
        <fullName>Found in mitochondria protein 39</fullName>
    </alternativeName>
</protein>
<name>AIM36_KLULA</name>
<feature type="transit peptide" description="Mitochondrion" evidence="2">
    <location>
        <begin position="1"/>
        <end position="26"/>
    </location>
</feature>
<feature type="chain" id="PRO_0000399726" description="Altered inheritance of mitochondria protein 36, mitochondrial">
    <location>
        <begin position="27"/>
        <end position="217"/>
    </location>
</feature>
<feature type="transmembrane region" description="Helical" evidence="2">
    <location>
        <begin position="34"/>
        <end position="50"/>
    </location>
</feature>
<reference key="1">
    <citation type="journal article" date="2004" name="Nature">
        <title>Genome evolution in yeasts.</title>
        <authorList>
            <person name="Dujon B."/>
            <person name="Sherman D."/>
            <person name="Fischer G."/>
            <person name="Durrens P."/>
            <person name="Casaregola S."/>
            <person name="Lafontaine I."/>
            <person name="de Montigny J."/>
            <person name="Marck C."/>
            <person name="Neuveglise C."/>
            <person name="Talla E."/>
            <person name="Goffard N."/>
            <person name="Frangeul L."/>
            <person name="Aigle M."/>
            <person name="Anthouard V."/>
            <person name="Babour A."/>
            <person name="Barbe V."/>
            <person name="Barnay S."/>
            <person name="Blanchin S."/>
            <person name="Beckerich J.-M."/>
            <person name="Beyne E."/>
            <person name="Bleykasten C."/>
            <person name="Boisrame A."/>
            <person name="Boyer J."/>
            <person name="Cattolico L."/>
            <person name="Confanioleri F."/>
            <person name="de Daruvar A."/>
            <person name="Despons L."/>
            <person name="Fabre E."/>
            <person name="Fairhead C."/>
            <person name="Ferry-Dumazet H."/>
            <person name="Groppi A."/>
            <person name="Hantraye F."/>
            <person name="Hennequin C."/>
            <person name="Jauniaux N."/>
            <person name="Joyet P."/>
            <person name="Kachouri R."/>
            <person name="Kerrest A."/>
            <person name="Koszul R."/>
            <person name="Lemaire M."/>
            <person name="Lesur I."/>
            <person name="Ma L."/>
            <person name="Muller H."/>
            <person name="Nicaud J.-M."/>
            <person name="Nikolski M."/>
            <person name="Oztas S."/>
            <person name="Ozier-Kalogeropoulos O."/>
            <person name="Pellenz S."/>
            <person name="Potier S."/>
            <person name="Richard G.-F."/>
            <person name="Straub M.-L."/>
            <person name="Suleau A."/>
            <person name="Swennen D."/>
            <person name="Tekaia F."/>
            <person name="Wesolowski-Louvel M."/>
            <person name="Westhof E."/>
            <person name="Wirth B."/>
            <person name="Zeniou-Meyer M."/>
            <person name="Zivanovic Y."/>
            <person name="Bolotin-Fukuhara M."/>
            <person name="Thierry A."/>
            <person name="Bouchier C."/>
            <person name="Caudron B."/>
            <person name="Scarpelli C."/>
            <person name="Gaillardin C."/>
            <person name="Weissenbach J."/>
            <person name="Wincker P."/>
            <person name="Souciet J.-L."/>
        </authorList>
    </citation>
    <scope>NUCLEOTIDE SEQUENCE [LARGE SCALE GENOMIC DNA]</scope>
    <source>
        <strain>ATCC 8585 / CBS 2359 / DSM 70799 / NBRC 1267 / NRRL Y-1140 / WM37</strain>
    </source>
</reference>
<proteinExistence type="inferred from homology"/>
<comment type="subcellular location">
    <subcellularLocation>
        <location evidence="1">Mitochondrion membrane</location>
        <topology evidence="1">Single-pass membrane protein</topology>
    </subcellularLocation>
</comment>
<comment type="similarity">
    <text evidence="3">Belongs to the AIM36 family.</text>
</comment>
<accession>Q6CPX6</accession>
<keyword id="KW-0472">Membrane</keyword>
<keyword id="KW-0496">Mitochondrion</keyword>
<keyword id="KW-1185">Reference proteome</keyword>
<keyword id="KW-0809">Transit peptide</keyword>
<keyword id="KW-0812">Transmembrane</keyword>
<keyword id="KW-1133">Transmembrane helix</keyword>
<organism>
    <name type="scientific">Kluyveromyces lactis (strain ATCC 8585 / CBS 2359 / DSM 70799 / NBRC 1267 / NRRL Y-1140 / WM37)</name>
    <name type="common">Yeast</name>
    <name type="synonym">Candida sphaerica</name>
    <dbReference type="NCBI Taxonomy" id="284590"/>
    <lineage>
        <taxon>Eukaryota</taxon>
        <taxon>Fungi</taxon>
        <taxon>Dikarya</taxon>
        <taxon>Ascomycota</taxon>
        <taxon>Saccharomycotina</taxon>
        <taxon>Saccharomycetes</taxon>
        <taxon>Saccharomycetales</taxon>
        <taxon>Saccharomycetaceae</taxon>
        <taxon>Kluyveromyces</taxon>
    </lineage>
</organism>